<keyword id="KW-0413">Isomerase</keyword>
<keyword id="KW-0423">Lactose metabolism</keyword>
<organism>
    <name type="scientific">Staphylococcus aureus (strain JH9)</name>
    <dbReference type="NCBI Taxonomy" id="359786"/>
    <lineage>
        <taxon>Bacteria</taxon>
        <taxon>Bacillati</taxon>
        <taxon>Bacillota</taxon>
        <taxon>Bacilli</taxon>
        <taxon>Bacillales</taxon>
        <taxon>Staphylococcaceae</taxon>
        <taxon>Staphylococcus</taxon>
    </lineage>
</organism>
<sequence>MAIIIGSDEAGKRLKEVIKSYLLDNKYDVVDVTEGQEVDFVDATLAVAKDVQSQEGNLGIVIDAFGAGSFMVATKIKGMIAAEVSDERSGYMTRGHNNSRMITMGSEIVGDTLAKNVVKGFVEGKYDGGRHQIRVDMLNKMC</sequence>
<gene>
    <name evidence="1" type="primary">lacA</name>
    <name type="ordered locus">SaurJH9_2226</name>
</gene>
<proteinExistence type="inferred from homology"/>
<dbReference type="EC" id="5.3.1.26" evidence="1"/>
<dbReference type="EMBL" id="CP000703">
    <property type="protein sequence ID" value="ABQ50007.1"/>
    <property type="molecule type" value="Genomic_DNA"/>
</dbReference>
<dbReference type="RefSeq" id="WP_000974608.1">
    <property type="nucleotide sequence ID" value="NC_009487.1"/>
</dbReference>
<dbReference type="SMR" id="A5IUY4"/>
<dbReference type="GeneID" id="98347039"/>
<dbReference type="KEGG" id="saj:SaurJH9_2226"/>
<dbReference type="HOGENOM" id="CLU_091396_4_2_9"/>
<dbReference type="UniPathway" id="UPA00702">
    <property type="reaction ID" value="UER00714"/>
</dbReference>
<dbReference type="GO" id="GO:0050044">
    <property type="term" value="F:galactose-6-phosphate isomerase activity"/>
    <property type="evidence" value="ECO:0007669"/>
    <property type="project" value="UniProtKB-UniRule"/>
</dbReference>
<dbReference type="GO" id="GO:0004751">
    <property type="term" value="F:ribose-5-phosphate isomerase activity"/>
    <property type="evidence" value="ECO:0007669"/>
    <property type="project" value="TreeGrafter"/>
</dbReference>
<dbReference type="GO" id="GO:0019316">
    <property type="term" value="P:D-allose catabolic process"/>
    <property type="evidence" value="ECO:0007669"/>
    <property type="project" value="TreeGrafter"/>
</dbReference>
<dbReference type="GO" id="GO:0019388">
    <property type="term" value="P:galactose catabolic process"/>
    <property type="evidence" value="ECO:0007669"/>
    <property type="project" value="UniProtKB-UniPathway"/>
</dbReference>
<dbReference type="GO" id="GO:0019512">
    <property type="term" value="P:lactose catabolic process via tagatose-6-phosphate"/>
    <property type="evidence" value="ECO:0007669"/>
    <property type="project" value="UniProtKB-UniRule"/>
</dbReference>
<dbReference type="GO" id="GO:0009052">
    <property type="term" value="P:pentose-phosphate shunt, non-oxidative branch"/>
    <property type="evidence" value="ECO:0007669"/>
    <property type="project" value="TreeGrafter"/>
</dbReference>
<dbReference type="Gene3D" id="3.40.1400.10">
    <property type="entry name" value="Sugar-phosphate isomerase, RpiB/LacA/LacB"/>
    <property type="match status" value="1"/>
</dbReference>
<dbReference type="HAMAP" id="MF_01555">
    <property type="entry name" value="LacA"/>
    <property type="match status" value="1"/>
</dbReference>
<dbReference type="InterPro" id="IPR004783">
    <property type="entry name" value="LacA"/>
</dbReference>
<dbReference type="InterPro" id="IPR003500">
    <property type="entry name" value="RpiB_LacA_LacB"/>
</dbReference>
<dbReference type="InterPro" id="IPR036569">
    <property type="entry name" value="RpiB_LacA_LacB_sf"/>
</dbReference>
<dbReference type="NCBIfam" id="TIGR01118">
    <property type="entry name" value="lacA"/>
    <property type="match status" value="1"/>
</dbReference>
<dbReference type="NCBIfam" id="NF006380">
    <property type="entry name" value="PRK08621.1"/>
    <property type="match status" value="1"/>
</dbReference>
<dbReference type="NCBIfam" id="TIGR00689">
    <property type="entry name" value="rpiB_lacA_lacB"/>
    <property type="match status" value="1"/>
</dbReference>
<dbReference type="PANTHER" id="PTHR30345:SF5">
    <property type="entry name" value="GALACTOSE-6-PHOSPHATE ISOMERASE SUBUNIT LACA"/>
    <property type="match status" value="1"/>
</dbReference>
<dbReference type="PANTHER" id="PTHR30345">
    <property type="entry name" value="RIBOSE-5-PHOSPHATE ISOMERASE B"/>
    <property type="match status" value="1"/>
</dbReference>
<dbReference type="Pfam" id="PF02502">
    <property type="entry name" value="LacAB_rpiB"/>
    <property type="match status" value="1"/>
</dbReference>
<dbReference type="PIRSF" id="PIRSF005384">
    <property type="entry name" value="RpiB_LacA_B"/>
    <property type="match status" value="1"/>
</dbReference>
<dbReference type="SUPFAM" id="SSF89623">
    <property type="entry name" value="Ribose/Galactose isomerase RpiB/AlsB"/>
    <property type="match status" value="1"/>
</dbReference>
<reference key="1">
    <citation type="submission" date="2007-05" db="EMBL/GenBank/DDBJ databases">
        <title>Complete sequence of chromosome of Staphylococcus aureus subsp. aureus JH9.</title>
        <authorList>
            <consortium name="US DOE Joint Genome Institute"/>
            <person name="Copeland A."/>
            <person name="Lucas S."/>
            <person name="Lapidus A."/>
            <person name="Barry K."/>
            <person name="Detter J.C."/>
            <person name="Glavina del Rio T."/>
            <person name="Hammon N."/>
            <person name="Israni S."/>
            <person name="Pitluck S."/>
            <person name="Chain P."/>
            <person name="Malfatti S."/>
            <person name="Shin M."/>
            <person name="Vergez L."/>
            <person name="Schmutz J."/>
            <person name="Larimer F."/>
            <person name="Land M."/>
            <person name="Hauser L."/>
            <person name="Kyrpides N."/>
            <person name="Kim E."/>
            <person name="Tomasz A."/>
            <person name="Richardson P."/>
        </authorList>
    </citation>
    <scope>NUCLEOTIDE SEQUENCE [LARGE SCALE GENOMIC DNA]</scope>
    <source>
        <strain>JH9</strain>
    </source>
</reference>
<protein>
    <recommendedName>
        <fullName evidence="1">Galactose-6-phosphate isomerase subunit LacA</fullName>
        <ecNumber evidence="1">5.3.1.26</ecNumber>
    </recommendedName>
</protein>
<comment type="catalytic activity">
    <reaction evidence="1">
        <text>aldehydo-D-galactose 6-phosphate = keto-D-tagatose 6-phosphate</text>
        <dbReference type="Rhea" id="RHEA:13033"/>
        <dbReference type="ChEBI" id="CHEBI:58255"/>
        <dbReference type="ChEBI" id="CHEBI:134283"/>
        <dbReference type="EC" id="5.3.1.26"/>
    </reaction>
</comment>
<comment type="pathway">
    <text evidence="1">Carbohydrate metabolism; D-galactose 6-phosphate degradation; D-tagatose 6-phosphate from D-galactose 6-phosphate: step 1/1.</text>
</comment>
<comment type="subunit">
    <text evidence="1">Heteromultimeric protein consisting of LacA and LacB.</text>
</comment>
<comment type="similarity">
    <text evidence="1">Belongs to the LacAB/RpiB family.</text>
</comment>
<accession>A5IUY4</accession>
<name>LACA_STAA9</name>
<feature type="chain" id="PRO_1000087785" description="Galactose-6-phosphate isomerase subunit LacA">
    <location>
        <begin position="1"/>
        <end position="142"/>
    </location>
</feature>
<evidence type="ECO:0000255" key="1">
    <source>
        <dbReference type="HAMAP-Rule" id="MF_01555"/>
    </source>
</evidence>